<keyword id="KW-0687">Ribonucleoprotein</keyword>
<keyword id="KW-0689">Ribosomal protein</keyword>
<keyword id="KW-0694">RNA-binding</keyword>
<keyword id="KW-0699">rRNA-binding</keyword>
<protein>
    <recommendedName>
        <fullName evidence="1">Large ribosomal subunit protein uL22</fullName>
    </recommendedName>
    <alternativeName>
        <fullName evidence="2">50S ribosomal protein L22</fullName>
    </alternativeName>
</protein>
<organism>
    <name type="scientific">Bordetella parapertussis (strain 12822 / ATCC BAA-587 / NCTC 13253)</name>
    <dbReference type="NCBI Taxonomy" id="257311"/>
    <lineage>
        <taxon>Bacteria</taxon>
        <taxon>Pseudomonadati</taxon>
        <taxon>Pseudomonadota</taxon>
        <taxon>Betaproteobacteria</taxon>
        <taxon>Burkholderiales</taxon>
        <taxon>Alcaligenaceae</taxon>
        <taxon>Bordetella</taxon>
    </lineage>
</organism>
<accession>Q7W2F1</accession>
<gene>
    <name evidence="1" type="primary">rplV</name>
    <name type="ordered locus">BPP0034</name>
</gene>
<dbReference type="EMBL" id="BX640423">
    <property type="protein sequence ID" value="CAE39775.1"/>
    <property type="molecule type" value="Genomic_DNA"/>
</dbReference>
<dbReference type="RefSeq" id="WP_010925688.1">
    <property type="nucleotide sequence ID" value="NC_002928.3"/>
</dbReference>
<dbReference type="SMR" id="Q7W2F1"/>
<dbReference type="GeneID" id="93206263"/>
<dbReference type="KEGG" id="bpa:BPP0034"/>
<dbReference type="HOGENOM" id="CLU_083987_3_3_4"/>
<dbReference type="Proteomes" id="UP000001421">
    <property type="component" value="Chromosome"/>
</dbReference>
<dbReference type="GO" id="GO:0022625">
    <property type="term" value="C:cytosolic large ribosomal subunit"/>
    <property type="evidence" value="ECO:0007669"/>
    <property type="project" value="TreeGrafter"/>
</dbReference>
<dbReference type="GO" id="GO:0019843">
    <property type="term" value="F:rRNA binding"/>
    <property type="evidence" value="ECO:0007669"/>
    <property type="project" value="UniProtKB-UniRule"/>
</dbReference>
<dbReference type="GO" id="GO:0003735">
    <property type="term" value="F:structural constituent of ribosome"/>
    <property type="evidence" value="ECO:0007669"/>
    <property type="project" value="InterPro"/>
</dbReference>
<dbReference type="GO" id="GO:0006412">
    <property type="term" value="P:translation"/>
    <property type="evidence" value="ECO:0007669"/>
    <property type="project" value="UniProtKB-UniRule"/>
</dbReference>
<dbReference type="CDD" id="cd00336">
    <property type="entry name" value="Ribosomal_L22"/>
    <property type="match status" value="1"/>
</dbReference>
<dbReference type="FunFam" id="3.90.470.10:FF:000001">
    <property type="entry name" value="50S ribosomal protein L22"/>
    <property type="match status" value="1"/>
</dbReference>
<dbReference type="Gene3D" id="3.90.470.10">
    <property type="entry name" value="Ribosomal protein L22/L17"/>
    <property type="match status" value="1"/>
</dbReference>
<dbReference type="HAMAP" id="MF_01331_B">
    <property type="entry name" value="Ribosomal_uL22_B"/>
    <property type="match status" value="1"/>
</dbReference>
<dbReference type="InterPro" id="IPR001063">
    <property type="entry name" value="Ribosomal_uL22"/>
</dbReference>
<dbReference type="InterPro" id="IPR005727">
    <property type="entry name" value="Ribosomal_uL22_bac/chlpt-type"/>
</dbReference>
<dbReference type="InterPro" id="IPR047867">
    <property type="entry name" value="Ribosomal_uL22_bac/org-type"/>
</dbReference>
<dbReference type="InterPro" id="IPR018260">
    <property type="entry name" value="Ribosomal_uL22_CS"/>
</dbReference>
<dbReference type="InterPro" id="IPR036394">
    <property type="entry name" value="Ribosomal_uL22_sf"/>
</dbReference>
<dbReference type="NCBIfam" id="TIGR01044">
    <property type="entry name" value="rplV_bact"/>
    <property type="match status" value="1"/>
</dbReference>
<dbReference type="PANTHER" id="PTHR13501">
    <property type="entry name" value="CHLOROPLAST 50S RIBOSOMAL PROTEIN L22-RELATED"/>
    <property type="match status" value="1"/>
</dbReference>
<dbReference type="PANTHER" id="PTHR13501:SF8">
    <property type="entry name" value="LARGE RIBOSOMAL SUBUNIT PROTEIN UL22M"/>
    <property type="match status" value="1"/>
</dbReference>
<dbReference type="Pfam" id="PF00237">
    <property type="entry name" value="Ribosomal_L22"/>
    <property type="match status" value="1"/>
</dbReference>
<dbReference type="SUPFAM" id="SSF54843">
    <property type="entry name" value="Ribosomal protein L22"/>
    <property type="match status" value="1"/>
</dbReference>
<dbReference type="PROSITE" id="PS00464">
    <property type="entry name" value="RIBOSOMAL_L22"/>
    <property type="match status" value="1"/>
</dbReference>
<evidence type="ECO:0000255" key="1">
    <source>
        <dbReference type="HAMAP-Rule" id="MF_01331"/>
    </source>
</evidence>
<evidence type="ECO:0000305" key="2"/>
<sequence>METTAIIRGVHISAQKTRLVADLIRGKSVAQALNILTFSPKKAAVILKKAVESAIANAEHNDGADIDELKVTTIFVDKAQSMKRFSARAKGRGNRIEKQTCHITVKVGA</sequence>
<reference key="1">
    <citation type="journal article" date="2003" name="Nat. Genet.">
        <title>Comparative analysis of the genome sequences of Bordetella pertussis, Bordetella parapertussis and Bordetella bronchiseptica.</title>
        <authorList>
            <person name="Parkhill J."/>
            <person name="Sebaihia M."/>
            <person name="Preston A."/>
            <person name="Murphy L.D."/>
            <person name="Thomson N.R."/>
            <person name="Harris D.E."/>
            <person name="Holden M.T.G."/>
            <person name="Churcher C.M."/>
            <person name="Bentley S.D."/>
            <person name="Mungall K.L."/>
            <person name="Cerdeno-Tarraga A.-M."/>
            <person name="Temple L."/>
            <person name="James K.D."/>
            <person name="Harris B."/>
            <person name="Quail M.A."/>
            <person name="Achtman M."/>
            <person name="Atkin R."/>
            <person name="Baker S."/>
            <person name="Basham D."/>
            <person name="Bason N."/>
            <person name="Cherevach I."/>
            <person name="Chillingworth T."/>
            <person name="Collins M."/>
            <person name="Cronin A."/>
            <person name="Davis P."/>
            <person name="Doggett J."/>
            <person name="Feltwell T."/>
            <person name="Goble A."/>
            <person name="Hamlin N."/>
            <person name="Hauser H."/>
            <person name="Holroyd S."/>
            <person name="Jagels K."/>
            <person name="Leather S."/>
            <person name="Moule S."/>
            <person name="Norberczak H."/>
            <person name="O'Neil S."/>
            <person name="Ormond D."/>
            <person name="Price C."/>
            <person name="Rabbinowitsch E."/>
            <person name="Rutter S."/>
            <person name="Sanders M."/>
            <person name="Saunders D."/>
            <person name="Seeger K."/>
            <person name="Sharp S."/>
            <person name="Simmonds M."/>
            <person name="Skelton J."/>
            <person name="Squares R."/>
            <person name="Squares S."/>
            <person name="Stevens K."/>
            <person name="Unwin L."/>
            <person name="Whitehead S."/>
            <person name="Barrell B.G."/>
            <person name="Maskell D.J."/>
        </authorList>
    </citation>
    <scope>NUCLEOTIDE SEQUENCE [LARGE SCALE GENOMIC DNA]</scope>
    <source>
        <strain>12822 / ATCC BAA-587 / NCTC 13253</strain>
    </source>
</reference>
<comment type="function">
    <text evidence="1">This protein binds specifically to 23S rRNA; its binding is stimulated by other ribosomal proteins, e.g. L4, L17, and L20. It is important during the early stages of 50S assembly. It makes multiple contacts with different domains of the 23S rRNA in the assembled 50S subunit and ribosome (By similarity).</text>
</comment>
<comment type="function">
    <text evidence="1">The globular domain of the protein is located near the polypeptide exit tunnel on the outside of the subunit, while an extended beta-hairpin is found that lines the wall of the exit tunnel in the center of the 70S ribosome.</text>
</comment>
<comment type="subunit">
    <text evidence="1">Part of the 50S ribosomal subunit.</text>
</comment>
<comment type="similarity">
    <text evidence="1">Belongs to the universal ribosomal protein uL22 family.</text>
</comment>
<feature type="chain" id="PRO_0000125125" description="Large ribosomal subunit protein uL22">
    <location>
        <begin position="1"/>
        <end position="109"/>
    </location>
</feature>
<proteinExistence type="inferred from homology"/>
<name>RL22_BORPA</name>